<keyword id="KW-0456">Lyase</keyword>
<keyword id="KW-0663">Pyridoxal phosphate</keyword>
<keyword id="KW-1185">Reference proteome</keyword>
<sequence length="483" mass="54188">MWYTSTRGMAPRVNFEGALFSGYAPDGGLYMPEELPRLDEETLRHWSTLSYRSLVKELCALFIGLELIPRHDLNDLIDRAFSRFRHRNVVHLCKLKNGLNILELWHGVTYAFKDLSLSCTAQFLQYFLEKKKKHVTIVVGTSGDTGSAAIESVQGSKNVDIIVLLPKGHCSKIQELQMTTVLKENVHVFEVEGNSDELDEPIKAVFADVAFVQRHNVMSLNSINWSRVLVQMAHHFFAYFQCTPSLDTHPLPTVEVVVPTGAGGNLAAGCIAQKMGLPICLVVAVNRNDIIHRTVQKGDFSLCEVLRTTLASAMDIQVPYNMERIFWLLSGSDSQTTRALMEQFERTQSLQLPKDLHNKLSEAVTSESVTDEAITQTMARCWEENQYLLCPHSATAVNYHYQQTDSGQSSIRCCLASASAVKFPEAVQAAGLTPETPAEILALEHKETRCIPMRRGDDWTQMLRVTIEGLSQRWKDCVVNPSE</sequence>
<name>THNS2_MOUSE</name>
<gene>
    <name type="primary">Thnsl2</name>
</gene>
<dbReference type="EC" id="4.2.3.-"/>
<dbReference type="EMBL" id="AK165463">
    <property type="protein sequence ID" value="BAE38200.1"/>
    <property type="molecule type" value="mRNA"/>
</dbReference>
<dbReference type="EMBL" id="BC025604">
    <property type="protein sequence ID" value="AAH25604.1"/>
    <property type="molecule type" value="mRNA"/>
</dbReference>
<dbReference type="EMBL" id="BC051244">
    <property type="protein sequence ID" value="AAH51244.1"/>
    <property type="molecule type" value="mRNA"/>
</dbReference>
<dbReference type="CCDS" id="CCDS20225.1"/>
<dbReference type="RefSeq" id="NP_001029101.1">
    <property type="nucleotide sequence ID" value="NM_001033929.2"/>
</dbReference>
<dbReference type="RefSeq" id="NP_848500.3">
    <property type="nucleotide sequence ID" value="NM_178413.5"/>
</dbReference>
<dbReference type="SMR" id="Q80W22"/>
<dbReference type="BioGRID" id="231215">
    <property type="interactions" value="10"/>
</dbReference>
<dbReference type="FunCoup" id="Q80W22">
    <property type="interactions" value="9"/>
</dbReference>
<dbReference type="STRING" id="10090.ENSMUSP00000124423"/>
<dbReference type="GlyGen" id="Q80W22">
    <property type="glycosylation" value="1 site, 1 N-linked glycan (1 site)"/>
</dbReference>
<dbReference type="iPTMnet" id="Q80W22"/>
<dbReference type="PhosphoSitePlus" id="Q80W22"/>
<dbReference type="SwissPalm" id="Q80W22"/>
<dbReference type="jPOST" id="Q80W22"/>
<dbReference type="PaxDb" id="10090-ENSMUSP00000124423"/>
<dbReference type="PeptideAtlas" id="Q80W22"/>
<dbReference type="ProteomicsDB" id="262776"/>
<dbReference type="Antibodypedia" id="32227">
    <property type="antibodies" value="132 antibodies from 27 providers"/>
</dbReference>
<dbReference type="DNASU" id="232078"/>
<dbReference type="Ensembl" id="ENSMUST00000074241.9">
    <property type="protein sequence ID" value="ENSMUSP00000073861.8"/>
    <property type="gene ID" value="ENSMUSG00000054474.16"/>
</dbReference>
<dbReference type="Ensembl" id="ENSMUST00000160918.8">
    <property type="protein sequence ID" value="ENSMUSP00000124423.2"/>
    <property type="gene ID" value="ENSMUSG00000054474.16"/>
</dbReference>
<dbReference type="GeneID" id="232078"/>
<dbReference type="KEGG" id="mmu:232078"/>
<dbReference type="UCSC" id="uc009cgf.2">
    <property type="organism name" value="mouse"/>
</dbReference>
<dbReference type="AGR" id="MGI:3041254"/>
<dbReference type="CTD" id="55258"/>
<dbReference type="MGI" id="MGI:3041254">
    <property type="gene designation" value="Thnsl2"/>
</dbReference>
<dbReference type="VEuPathDB" id="HostDB:ENSMUSG00000054474"/>
<dbReference type="eggNOG" id="KOG2616">
    <property type="taxonomic scope" value="Eukaryota"/>
</dbReference>
<dbReference type="GeneTree" id="ENSGT00940000158503"/>
<dbReference type="HOGENOM" id="CLU_015170_1_1_1"/>
<dbReference type="InParanoid" id="Q80W22"/>
<dbReference type="OMA" id="NFERYLY"/>
<dbReference type="OrthoDB" id="5203861at2759"/>
<dbReference type="PhylomeDB" id="Q80W22"/>
<dbReference type="TreeFam" id="TF329641"/>
<dbReference type="BioGRID-ORCS" id="232078">
    <property type="hits" value="2 hits in 75 CRISPR screens"/>
</dbReference>
<dbReference type="ChiTaRS" id="Thnsl2">
    <property type="organism name" value="mouse"/>
</dbReference>
<dbReference type="PRO" id="PR:Q80W22"/>
<dbReference type="Proteomes" id="UP000000589">
    <property type="component" value="Chromosome 6"/>
</dbReference>
<dbReference type="RNAct" id="Q80W22">
    <property type="molecule type" value="protein"/>
</dbReference>
<dbReference type="Bgee" id="ENSMUSG00000054474">
    <property type="expression patterns" value="Expressed in right kidney and 133 other cell types or tissues"/>
</dbReference>
<dbReference type="ExpressionAtlas" id="Q80W22">
    <property type="expression patterns" value="baseline and differential"/>
</dbReference>
<dbReference type="GO" id="GO:0016829">
    <property type="term" value="F:lyase activity"/>
    <property type="evidence" value="ECO:0007669"/>
    <property type="project" value="UniProtKB-KW"/>
</dbReference>
<dbReference type="GO" id="GO:0016791">
    <property type="term" value="F:phosphatase activity"/>
    <property type="evidence" value="ECO:0000314"/>
    <property type="project" value="BHF-UCL"/>
</dbReference>
<dbReference type="GO" id="GO:0030170">
    <property type="term" value="F:pyridoxal phosphate binding"/>
    <property type="evidence" value="ECO:0000314"/>
    <property type="project" value="MGI"/>
</dbReference>
<dbReference type="GO" id="GO:0070905">
    <property type="term" value="F:serine binding"/>
    <property type="evidence" value="ECO:0000314"/>
    <property type="project" value="BHF-UCL"/>
</dbReference>
<dbReference type="CDD" id="cd01560">
    <property type="entry name" value="Thr-synth_2"/>
    <property type="match status" value="1"/>
</dbReference>
<dbReference type="FunFam" id="3.90.1380.10:FF:000003">
    <property type="entry name" value="THR4p Threonine synthase"/>
    <property type="match status" value="1"/>
</dbReference>
<dbReference type="FunFam" id="3.40.50.1100:FF:000047">
    <property type="entry name" value="Threonine synthase like 2"/>
    <property type="match status" value="1"/>
</dbReference>
<dbReference type="Gene3D" id="3.40.50.1100">
    <property type="match status" value="2"/>
</dbReference>
<dbReference type="Gene3D" id="3.90.1380.10">
    <property type="entry name" value="Threonine synthase, N-terminal domain"/>
    <property type="match status" value="1"/>
</dbReference>
<dbReference type="InterPro" id="IPR029144">
    <property type="entry name" value="Thr_synth_N"/>
</dbReference>
<dbReference type="InterPro" id="IPR037158">
    <property type="entry name" value="Thr_synth_N_sf"/>
</dbReference>
<dbReference type="InterPro" id="IPR004450">
    <property type="entry name" value="Thr_synthase-like"/>
</dbReference>
<dbReference type="InterPro" id="IPR051166">
    <property type="entry name" value="Threonine_Synthase"/>
</dbReference>
<dbReference type="InterPro" id="IPR001926">
    <property type="entry name" value="TrpB-like_PALP"/>
</dbReference>
<dbReference type="InterPro" id="IPR036052">
    <property type="entry name" value="TrpB-like_PALP_sf"/>
</dbReference>
<dbReference type="NCBIfam" id="TIGR00260">
    <property type="entry name" value="thrC"/>
    <property type="match status" value="1"/>
</dbReference>
<dbReference type="PANTHER" id="PTHR42690">
    <property type="entry name" value="THREONINE SYNTHASE FAMILY MEMBER"/>
    <property type="match status" value="1"/>
</dbReference>
<dbReference type="PANTHER" id="PTHR42690:SF1">
    <property type="entry name" value="THREONINE SYNTHASE-LIKE 2"/>
    <property type="match status" value="1"/>
</dbReference>
<dbReference type="Pfam" id="PF00291">
    <property type="entry name" value="PALP"/>
    <property type="match status" value="1"/>
</dbReference>
<dbReference type="Pfam" id="PF14821">
    <property type="entry name" value="Thr_synth_N"/>
    <property type="match status" value="1"/>
</dbReference>
<dbReference type="SUPFAM" id="SSF53686">
    <property type="entry name" value="Tryptophan synthase beta subunit-like PLP-dependent enzymes"/>
    <property type="match status" value="1"/>
</dbReference>
<proteinExistence type="evidence at protein level"/>
<accession>Q80W22</accession>
<accession>Q8R135</accession>
<organism>
    <name type="scientific">Mus musculus</name>
    <name type="common">Mouse</name>
    <dbReference type="NCBI Taxonomy" id="10090"/>
    <lineage>
        <taxon>Eukaryota</taxon>
        <taxon>Metazoa</taxon>
        <taxon>Chordata</taxon>
        <taxon>Craniata</taxon>
        <taxon>Vertebrata</taxon>
        <taxon>Euteleostomi</taxon>
        <taxon>Mammalia</taxon>
        <taxon>Eutheria</taxon>
        <taxon>Euarchontoglires</taxon>
        <taxon>Glires</taxon>
        <taxon>Rodentia</taxon>
        <taxon>Myomorpha</taxon>
        <taxon>Muroidea</taxon>
        <taxon>Muridae</taxon>
        <taxon>Murinae</taxon>
        <taxon>Mus</taxon>
        <taxon>Mus</taxon>
    </lineage>
</organism>
<comment type="function">
    <text evidence="2">Acts as a catabolic phospho-lyase on both gamma- and beta-phosphorylated substrates. Degrades O-phospho-threonine (PThr) to alpha-ketobutyrate, ammonia and phosphate. Also degrades O-phospho-homoserine (PHS), but this is not its physiological substrate.</text>
</comment>
<comment type="cofactor">
    <cofactor evidence="2">
        <name>pyridoxal 5'-phosphate</name>
        <dbReference type="ChEBI" id="CHEBI:597326"/>
    </cofactor>
</comment>
<comment type="similarity">
    <text evidence="3">Belongs to the threonine synthase family.</text>
</comment>
<feature type="chain" id="PRO_0000306408" description="Threonine synthase-like 2">
    <location>
        <begin position="1"/>
        <end position="483"/>
    </location>
</feature>
<feature type="modified residue" description="N6-(pyridoxal phosphate)lysine" evidence="1">
    <location>
        <position position="113"/>
    </location>
</feature>
<feature type="sequence conflict" description="In Ref. 1; AAH25604." evidence="3" ref="1">
    <original>Q</original>
    <variation>P</variation>
    <location>
        <position position="408"/>
    </location>
</feature>
<feature type="sequence conflict" description="In Ref. 1; AAH25604." evidence="3" ref="1">
    <original>E</original>
    <variation>K</variation>
    <location>
        <position position="425"/>
    </location>
</feature>
<evidence type="ECO:0000250" key="1"/>
<evidence type="ECO:0000269" key="2">
    <source>
    </source>
</evidence>
<evidence type="ECO:0000305" key="3"/>
<reference key="1">
    <citation type="journal article" date="2005" name="Science">
        <title>The transcriptional landscape of the mammalian genome.</title>
        <authorList>
            <person name="Carninci P."/>
            <person name="Kasukawa T."/>
            <person name="Katayama S."/>
            <person name="Gough J."/>
            <person name="Frith M.C."/>
            <person name="Maeda N."/>
            <person name="Oyama R."/>
            <person name="Ravasi T."/>
            <person name="Lenhard B."/>
            <person name="Wells C."/>
            <person name="Kodzius R."/>
            <person name="Shimokawa K."/>
            <person name="Bajic V.B."/>
            <person name="Brenner S.E."/>
            <person name="Batalov S."/>
            <person name="Forrest A.R."/>
            <person name="Zavolan M."/>
            <person name="Davis M.J."/>
            <person name="Wilming L.G."/>
            <person name="Aidinis V."/>
            <person name="Allen J.E."/>
            <person name="Ambesi-Impiombato A."/>
            <person name="Apweiler R."/>
            <person name="Aturaliya R.N."/>
            <person name="Bailey T.L."/>
            <person name="Bansal M."/>
            <person name="Baxter L."/>
            <person name="Beisel K.W."/>
            <person name="Bersano T."/>
            <person name="Bono H."/>
            <person name="Chalk A.M."/>
            <person name="Chiu K.P."/>
            <person name="Choudhary V."/>
            <person name="Christoffels A."/>
            <person name="Clutterbuck D.R."/>
            <person name="Crowe M.L."/>
            <person name="Dalla E."/>
            <person name="Dalrymple B.P."/>
            <person name="de Bono B."/>
            <person name="Della Gatta G."/>
            <person name="di Bernardo D."/>
            <person name="Down T."/>
            <person name="Engstrom P."/>
            <person name="Fagiolini M."/>
            <person name="Faulkner G."/>
            <person name="Fletcher C.F."/>
            <person name="Fukushima T."/>
            <person name="Furuno M."/>
            <person name="Futaki S."/>
            <person name="Gariboldi M."/>
            <person name="Georgii-Hemming P."/>
            <person name="Gingeras T.R."/>
            <person name="Gojobori T."/>
            <person name="Green R.E."/>
            <person name="Gustincich S."/>
            <person name="Harbers M."/>
            <person name="Hayashi Y."/>
            <person name="Hensch T.K."/>
            <person name="Hirokawa N."/>
            <person name="Hill D."/>
            <person name="Huminiecki L."/>
            <person name="Iacono M."/>
            <person name="Ikeo K."/>
            <person name="Iwama A."/>
            <person name="Ishikawa T."/>
            <person name="Jakt M."/>
            <person name="Kanapin A."/>
            <person name="Katoh M."/>
            <person name="Kawasawa Y."/>
            <person name="Kelso J."/>
            <person name="Kitamura H."/>
            <person name="Kitano H."/>
            <person name="Kollias G."/>
            <person name="Krishnan S.P."/>
            <person name="Kruger A."/>
            <person name="Kummerfeld S.K."/>
            <person name="Kurochkin I.V."/>
            <person name="Lareau L.F."/>
            <person name="Lazarevic D."/>
            <person name="Lipovich L."/>
            <person name="Liu J."/>
            <person name="Liuni S."/>
            <person name="McWilliam S."/>
            <person name="Madan Babu M."/>
            <person name="Madera M."/>
            <person name="Marchionni L."/>
            <person name="Matsuda H."/>
            <person name="Matsuzawa S."/>
            <person name="Miki H."/>
            <person name="Mignone F."/>
            <person name="Miyake S."/>
            <person name="Morris K."/>
            <person name="Mottagui-Tabar S."/>
            <person name="Mulder N."/>
            <person name="Nakano N."/>
            <person name="Nakauchi H."/>
            <person name="Ng P."/>
            <person name="Nilsson R."/>
            <person name="Nishiguchi S."/>
            <person name="Nishikawa S."/>
            <person name="Nori F."/>
            <person name="Ohara O."/>
            <person name="Okazaki Y."/>
            <person name="Orlando V."/>
            <person name="Pang K.C."/>
            <person name="Pavan W.J."/>
            <person name="Pavesi G."/>
            <person name="Pesole G."/>
            <person name="Petrovsky N."/>
            <person name="Piazza S."/>
            <person name="Reed J."/>
            <person name="Reid J.F."/>
            <person name="Ring B.Z."/>
            <person name="Ringwald M."/>
            <person name="Rost B."/>
            <person name="Ruan Y."/>
            <person name="Salzberg S.L."/>
            <person name="Sandelin A."/>
            <person name="Schneider C."/>
            <person name="Schoenbach C."/>
            <person name="Sekiguchi K."/>
            <person name="Semple C.A."/>
            <person name="Seno S."/>
            <person name="Sessa L."/>
            <person name="Sheng Y."/>
            <person name="Shibata Y."/>
            <person name="Shimada H."/>
            <person name="Shimada K."/>
            <person name="Silva D."/>
            <person name="Sinclair B."/>
            <person name="Sperling S."/>
            <person name="Stupka E."/>
            <person name="Sugiura K."/>
            <person name="Sultana R."/>
            <person name="Takenaka Y."/>
            <person name="Taki K."/>
            <person name="Tammoja K."/>
            <person name="Tan S.L."/>
            <person name="Tang S."/>
            <person name="Taylor M.S."/>
            <person name="Tegner J."/>
            <person name="Teichmann S.A."/>
            <person name="Ueda H.R."/>
            <person name="van Nimwegen E."/>
            <person name="Verardo R."/>
            <person name="Wei C.L."/>
            <person name="Yagi K."/>
            <person name="Yamanishi H."/>
            <person name="Zabarovsky E."/>
            <person name="Zhu S."/>
            <person name="Zimmer A."/>
            <person name="Hide W."/>
            <person name="Bult C."/>
            <person name="Grimmond S.M."/>
            <person name="Teasdale R.D."/>
            <person name="Liu E.T."/>
            <person name="Brusic V."/>
            <person name="Quackenbush J."/>
            <person name="Wahlestedt C."/>
            <person name="Mattick J.S."/>
            <person name="Hume D.A."/>
            <person name="Kai C."/>
            <person name="Sasaki D."/>
            <person name="Tomaru Y."/>
            <person name="Fukuda S."/>
            <person name="Kanamori-Katayama M."/>
            <person name="Suzuki M."/>
            <person name="Aoki J."/>
            <person name="Arakawa T."/>
            <person name="Iida J."/>
            <person name="Imamura K."/>
            <person name="Itoh M."/>
            <person name="Kato T."/>
            <person name="Kawaji H."/>
            <person name="Kawagashira N."/>
            <person name="Kawashima T."/>
            <person name="Kojima M."/>
            <person name="Kondo S."/>
            <person name="Konno H."/>
            <person name="Nakano K."/>
            <person name="Ninomiya N."/>
            <person name="Nishio T."/>
            <person name="Okada M."/>
            <person name="Plessy C."/>
            <person name="Shibata K."/>
            <person name="Shiraki T."/>
            <person name="Suzuki S."/>
            <person name="Tagami M."/>
            <person name="Waki K."/>
            <person name="Watahiki A."/>
            <person name="Okamura-Oho Y."/>
            <person name="Suzuki H."/>
            <person name="Kawai J."/>
            <person name="Hayashizaki Y."/>
        </authorList>
    </citation>
    <scope>NUCLEOTIDE SEQUENCE [LARGE SCALE MRNA]</scope>
    <source>
        <strain>C57BL/6J</strain>
        <tissue>Kidney</tissue>
    </source>
</reference>
<reference key="2">
    <citation type="journal article" date="2004" name="Genome Res.">
        <title>The status, quality, and expansion of the NIH full-length cDNA project: the Mammalian Gene Collection (MGC).</title>
        <authorList>
            <consortium name="The MGC Project Team"/>
        </authorList>
    </citation>
    <scope>NUCLEOTIDE SEQUENCE [LARGE SCALE MRNA]</scope>
    <source>
        <strain>FVB/N</strain>
        <tissue>Kidney</tissue>
        <tissue>Mammary tumor</tissue>
    </source>
</reference>
<reference key="3">
    <citation type="journal article" date="2006" name="Biochem. Biophys. Res. Commun.">
        <title>A threonine synthase homolog from a mammalian genome.</title>
        <authorList>
            <person name="Donini S."/>
            <person name="Percudani R."/>
            <person name="Credali A."/>
            <person name="Montanini B."/>
            <person name="Sartori A."/>
            <person name="Peracchi A."/>
        </authorList>
    </citation>
    <scope>FUNCTION</scope>
    <scope>COFACTOR</scope>
</reference>
<reference key="4">
    <citation type="journal article" date="2010" name="Cell">
        <title>A tissue-specific atlas of mouse protein phosphorylation and expression.</title>
        <authorList>
            <person name="Huttlin E.L."/>
            <person name="Jedrychowski M.P."/>
            <person name="Elias J.E."/>
            <person name="Goswami T."/>
            <person name="Rad R."/>
            <person name="Beausoleil S.A."/>
            <person name="Villen J."/>
            <person name="Haas W."/>
            <person name="Sowa M.E."/>
            <person name="Gygi S.P."/>
        </authorList>
    </citation>
    <scope>IDENTIFICATION BY MASS SPECTROMETRY [LARGE SCALE ANALYSIS]</scope>
    <source>
        <tissue>Kidney</tissue>
    </source>
</reference>
<protein>
    <recommendedName>
        <fullName>Threonine synthase-like 2</fullName>
        <shortName>TSH2</shortName>
        <shortName>mTSH2</shortName>
        <ecNumber>4.2.3.-</ecNumber>
    </recommendedName>
</protein>